<feature type="chain" id="PRO_0000110232" description="Fluoride-specific ion channel FluC">
    <location>
        <begin position="1"/>
        <end position="122"/>
    </location>
</feature>
<feature type="transmembrane region" description="Helical" evidence="1">
    <location>
        <begin position="4"/>
        <end position="24"/>
    </location>
</feature>
<feature type="transmembrane region" description="Helical" evidence="1">
    <location>
        <begin position="36"/>
        <end position="56"/>
    </location>
</feature>
<feature type="transmembrane region" description="Helical" evidence="1">
    <location>
        <begin position="65"/>
        <end position="85"/>
    </location>
</feature>
<feature type="transmembrane region" description="Helical" evidence="1">
    <location>
        <begin position="100"/>
        <end position="120"/>
    </location>
</feature>
<feature type="binding site" evidence="1">
    <location>
        <position position="72"/>
    </location>
    <ligand>
        <name>Na(+)</name>
        <dbReference type="ChEBI" id="CHEBI:29101"/>
        <note>structural</note>
    </ligand>
</feature>
<feature type="binding site" evidence="1">
    <location>
        <position position="75"/>
    </location>
    <ligand>
        <name>Na(+)</name>
        <dbReference type="ChEBI" id="CHEBI:29101"/>
        <note>structural</note>
    </ligand>
</feature>
<dbReference type="EMBL" id="BX950229">
    <property type="protein sequence ID" value="CAF30835.1"/>
    <property type="molecule type" value="Genomic_DNA"/>
</dbReference>
<dbReference type="RefSeq" id="WP_011171223.1">
    <property type="nucleotide sequence ID" value="NC_005791.1"/>
</dbReference>
<dbReference type="SMR" id="P61395"/>
<dbReference type="STRING" id="267377.MMP1279"/>
<dbReference type="EnsemblBacteria" id="CAF30835">
    <property type="protein sequence ID" value="CAF30835"/>
    <property type="gene ID" value="MMP1279"/>
</dbReference>
<dbReference type="GeneID" id="41279908"/>
<dbReference type="KEGG" id="mmp:MMP1279"/>
<dbReference type="PATRIC" id="fig|267377.15.peg.1312"/>
<dbReference type="eggNOG" id="arCOG04701">
    <property type="taxonomic scope" value="Archaea"/>
</dbReference>
<dbReference type="HOGENOM" id="CLU_114342_3_0_2"/>
<dbReference type="OrthoDB" id="253428at2157"/>
<dbReference type="Proteomes" id="UP000000590">
    <property type="component" value="Chromosome"/>
</dbReference>
<dbReference type="GO" id="GO:0005886">
    <property type="term" value="C:plasma membrane"/>
    <property type="evidence" value="ECO:0007669"/>
    <property type="project" value="UniProtKB-SubCell"/>
</dbReference>
<dbReference type="GO" id="GO:0062054">
    <property type="term" value="F:fluoride channel activity"/>
    <property type="evidence" value="ECO:0007669"/>
    <property type="project" value="UniProtKB-UniRule"/>
</dbReference>
<dbReference type="GO" id="GO:0046872">
    <property type="term" value="F:metal ion binding"/>
    <property type="evidence" value="ECO:0007669"/>
    <property type="project" value="UniProtKB-KW"/>
</dbReference>
<dbReference type="GO" id="GO:0140114">
    <property type="term" value="P:cellular detoxification of fluoride"/>
    <property type="evidence" value="ECO:0007669"/>
    <property type="project" value="UniProtKB-UniRule"/>
</dbReference>
<dbReference type="HAMAP" id="MF_00454">
    <property type="entry name" value="FluC"/>
    <property type="match status" value="1"/>
</dbReference>
<dbReference type="InterPro" id="IPR003691">
    <property type="entry name" value="FluC"/>
</dbReference>
<dbReference type="NCBIfam" id="TIGR00494">
    <property type="entry name" value="crcB"/>
    <property type="match status" value="1"/>
</dbReference>
<dbReference type="PANTHER" id="PTHR28259">
    <property type="entry name" value="FLUORIDE EXPORT PROTEIN 1-RELATED"/>
    <property type="match status" value="1"/>
</dbReference>
<dbReference type="PANTHER" id="PTHR28259:SF1">
    <property type="entry name" value="FLUORIDE EXPORT PROTEIN 1-RELATED"/>
    <property type="match status" value="1"/>
</dbReference>
<dbReference type="Pfam" id="PF02537">
    <property type="entry name" value="CRCB"/>
    <property type="match status" value="1"/>
</dbReference>
<keyword id="KW-1003">Cell membrane</keyword>
<keyword id="KW-0407">Ion channel</keyword>
<keyword id="KW-0406">Ion transport</keyword>
<keyword id="KW-0472">Membrane</keyword>
<keyword id="KW-0479">Metal-binding</keyword>
<keyword id="KW-1185">Reference proteome</keyword>
<keyword id="KW-0915">Sodium</keyword>
<keyword id="KW-0812">Transmembrane</keyword>
<keyword id="KW-1133">Transmembrane helix</keyword>
<keyword id="KW-0813">Transport</keyword>
<organism>
    <name type="scientific">Methanococcus maripaludis (strain DSM 14266 / JCM 13030 / NBRC 101832 / S2 / LL)</name>
    <dbReference type="NCBI Taxonomy" id="267377"/>
    <lineage>
        <taxon>Archaea</taxon>
        <taxon>Methanobacteriati</taxon>
        <taxon>Methanobacteriota</taxon>
        <taxon>Methanomada group</taxon>
        <taxon>Methanococci</taxon>
        <taxon>Methanococcales</taxon>
        <taxon>Methanococcaceae</taxon>
        <taxon>Methanococcus</taxon>
    </lineage>
</organism>
<proteinExistence type="inferred from homology"/>
<name>FLUC_METMP</name>
<gene>
    <name evidence="1" type="primary">fluC</name>
    <name evidence="1" type="synonym">crcB</name>
    <name type="ordered locus">MMP1279</name>
</gene>
<reference key="1">
    <citation type="journal article" date="2004" name="J. Bacteriol.">
        <title>Complete genome sequence of the genetically tractable hydrogenotrophic methanogen Methanococcus maripaludis.</title>
        <authorList>
            <person name="Hendrickson E.L."/>
            <person name="Kaul R."/>
            <person name="Zhou Y."/>
            <person name="Bovee D."/>
            <person name="Chapman P."/>
            <person name="Chung J."/>
            <person name="Conway de Macario E."/>
            <person name="Dodsworth J.A."/>
            <person name="Gillett W."/>
            <person name="Graham D.E."/>
            <person name="Hackett M."/>
            <person name="Haydock A.K."/>
            <person name="Kang A."/>
            <person name="Land M.L."/>
            <person name="Levy R."/>
            <person name="Lie T.J."/>
            <person name="Major T.A."/>
            <person name="Moore B.C."/>
            <person name="Porat I."/>
            <person name="Palmeiri A."/>
            <person name="Rouse G."/>
            <person name="Saenphimmachak C."/>
            <person name="Soell D."/>
            <person name="Van Dien S."/>
            <person name="Wang T."/>
            <person name="Whitman W.B."/>
            <person name="Xia Q."/>
            <person name="Zhang Y."/>
            <person name="Larimer F.W."/>
            <person name="Olson M.V."/>
            <person name="Leigh J.A."/>
        </authorList>
    </citation>
    <scope>NUCLEOTIDE SEQUENCE [LARGE SCALE GENOMIC DNA]</scope>
    <source>
        <strain>DSM 14266 / JCM 13030 / NBRC 101832 / S2 / LL</strain>
    </source>
</reference>
<comment type="function">
    <text evidence="1">Fluoride-specific ion channel. Important for reducing fluoride concentration in the cell, thus reducing its toxicity.</text>
</comment>
<comment type="catalytic activity">
    <reaction evidence="1">
        <text>fluoride(in) = fluoride(out)</text>
        <dbReference type="Rhea" id="RHEA:76159"/>
        <dbReference type="ChEBI" id="CHEBI:17051"/>
    </reaction>
    <physiologicalReaction direction="left-to-right" evidence="1">
        <dbReference type="Rhea" id="RHEA:76160"/>
    </physiologicalReaction>
</comment>
<comment type="activity regulation">
    <text evidence="1">Na(+) is not transported, but it plays an essential structural role and its presence is essential for fluoride channel function.</text>
</comment>
<comment type="subcellular location">
    <subcellularLocation>
        <location evidence="1">Cell membrane</location>
        <topology evidence="1">Multi-pass membrane protein</topology>
    </subcellularLocation>
</comment>
<comment type="similarity">
    <text evidence="1">Belongs to the fluoride channel Fluc/FEX (TC 1.A.43) family.</text>
</comment>
<accession>P61395</accession>
<sequence>MREILLIGLGGFFGAILRYLVSGIIPVKFGIPTGTLIVNLLGSFIIGFLIYSSLFGSLSTEYRLFIITGFCGALTTFSTFSYESFTMLEHNYYLKTGLNILLNVFGCLGMVYLGRLASMFFW</sequence>
<protein>
    <recommendedName>
        <fullName evidence="1">Fluoride-specific ion channel FluC</fullName>
    </recommendedName>
</protein>
<evidence type="ECO:0000255" key="1">
    <source>
        <dbReference type="HAMAP-Rule" id="MF_00454"/>
    </source>
</evidence>